<protein>
    <recommendedName>
        <fullName>Plastin-3</fullName>
    </recommendedName>
    <alternativeName>
        <fullName>T-plastin</fullName>
    </alternativeName>
</protein>
<reference key="1">
    <citation type="submission" date="2008-04" db="EMBL/GenBank/DDBJ databases">
        <authorList>
            <consortium name="NIH - Zebrafish Gene Collection (ZGC) project"/>
        </authorList>
    </citation>
    <scope>NUCLEOTIDE SEQUENCE [LARGE SCALE MRNA]</scope>
</reference>
<reference key="2">
    <citation type="journal article" date="2013" name="Nature">
        <title>The zebrafish reference genome sequence and its relationship to the human genome.</title>
        <authorList>
            <person name="Howe K."/>
            <person name="Clark M.D."/>
            <person name="Torroja C.F."/>
            <person name="Torrance J."/>
            <person name="Berthelot C."/>
            <person name="Muffato M."/>
            <person name="Collins J.E."/>
            <person name="Humphray S."/>
            <person name="McLaren K."/>
            <person name="Matthews L."/>
            <person name="McLaren S."/>
            <person name="Sealy I."/>
            <person name="Caccamo M."/>
            <person name="Churcher C."/>
            <person name="Scott C."/>
            <person name="Barrett J.C."/>
            <person name="Koch R."/>
            <person name="Rauch G.J."/>
            <person name="White S."/>
            <person name="Chow W."/>
            <person name="Kilian B."/>
            <person name="Quintais L.T."/>
            <person name="Guerra-Assuncao J.A."/>
            <person name="Zhou Y."/>
            <person name="Gu Y."/>
            <person name="Yen J."/>
            <person name="Vogel J.H."/>
            <person name="Eyre T."/>
            <person name="Redmond S."/>
            <person name="Banerjee R."/>
            <person name="Chi J."/>
            <person name="Fu B."/>
            <person name="Langley E."/>
            <person name="Maguire S.F."/>
            <person name="Laird G.K."/>
            <person name="Lloyd D."/>
            <person name="Kenyon E."/>
            <person name="Donaldson S."/>
            <person name="Sehra H."/>
            <person name="Almeida-King J."/>
            <person name="Loveland J."/>
            <person name="Trevanion S."/>
            <person name="Jones M."/>
            <person name="Quail M."/>
            <person name="Willey D."/>
            <person name="Hunt A."/>
            <person name="Burton J."/>
            <person name="Sims S."/>
            <person name="McLay K."/>
            <person name="Plumb B."/>
            <person name="Davis J."/>
            <person name="Clee C."/>
            <person name="Oliver K."/>
            <person name="Clark R."/>
            <person name="Riddle C."/>
            <person name="Elliot D."/>
            <person name="Threadgold G."/>
            <person name="Harden G."/>
            <person name="Ware D."/>
            <person name="Begum S."/>
            <person name="Mortimore B."/>
            <person name="Kerry G."/>
            <person name="Heath P."/>
            <person name="Phillimore B."/>
            <person name="Tracey A."/>
            <person name="Corby N."/>
            <person name="Dunn M."/>
            <person name="Johnson C."/>
            <person name="Wood J."/>
            <person name="Clark S."/>
            <person name="Pelan S."/>
            <person name="Griffiths G."/>
            <person name="Smith M."/>
            <person name="Glithero R."/>
            <person name="Howden P."/>
            <person name="Barker N."/>
            <person name="Lloyd C."/>
            <person name="Stevens C."/>
            <person name="Harley J."/>
            <person name="Holt K."/>
            <person name="Panagiotidis G."/>
            <person name="Lovell J."/>
            <person name="Beasley H."/>
            <person name="Henderson C."/>
            <person name="Gordon D."/>
            <person name="Auger K."/>
            <person name="Wright D."/>
            <person name="Collins J."/>
            <person name="Raisen C."/>
            <person name="Dyer L."/>
            <person name="Leung K."/>
            <person name="Robertson L."/>
            <person name="Ambridge K."/>
            <person name="Leongamornlert D."/>
            <person name="McGuire S."/>
            <person name="Gilderthorp R."/>
            <person name="Griffiths C."/>
            <person name="Manthravadi D."/>
            <person name="Nichol S."/>
            <person name="Barker G."/>
            <person name="Whitehead S."/>
            <person name="Kay M."/>
            <person name="Brown J."/>
            <person name="Murnane C."/>
            <person name="Gray E."/>
            <person name="Humphries M."/>
            <person name="Sycamore N."/>
            <person name="Barker D."/>
            <person name="Saunders D."/>
            <person name="Wallis J."/>
            <person name="Babbage A."/>
            <person name="Hammond S."/>
            <person name="Mashreghi-Mohammadi M."/>
            <person name="Barr L."/>
            <person name="Martin S."/>
            <person name="Wray P."/>
            <person name="Ellington A."/>
            <person name="Matthews N."/>
            <person name="Ellwood M."/>
            <person name="Woodmansey R."/>
            <person name="Clark G."/>
            <person name="Cooper J."/>
            <person name="Tromans A."/>
            <person name="Grafham D."/>
            <person name="Skuce C."/>
            <person name="Pandian R."/>
            <person name="Andrews R."/>
            <person name="Harrison E."/>
            <person name="Kimberley A."/>
            <person name="Garnett J."/>
            <person name="Fosker N."/>
            <person name="Hall R."/>
            <person name="Garner P."/>
            <person name="Kelly D."/>
            <person name="Bird C."/>
            <person name="Palmer S."/>
            <person name="Gehring I."/>
            <person name="Berger A."/>
            <person name="Dooley C.M."/>
            <person name="Ersan-Urun Z."/>
            <person name="Eser C."/>
            <person name="Geiger H."/>
            <person name="Geisler M."/>
            <person name="Karotki L."/>
            <person name="Kirn A."/>
            <person name="Konantz J."/>
            <person name="Konantz M."/>
            <person name="Oberlander M."/>
            <person name="Rudolph-Geiger S."/>
            <person name="Teucke M."/>
            <person name="Lanz C."/>
            <person name="Raddatz G."/>
            <person name="Osoegawa K."/>
            <person name="Zhu B."/>
            <person name="Rapp A."/>
            <person name="Widaa S."/>
            <person name="Langford C."/>
            <person name="Yang F."/>
            <person name="Schuster S.C."/>
            <person name="Carter N.P."/>
            <person name="Harrow J."/>
            <person name="Ning Z."/>
            <person name="Herrero J."/>
            <person name="Searle S.M."/>
            <person name="Enright A."/>
            <person name="Geisler R."/>
            <person name="Plasterk R.H."/>
            <person name="Lee C."/>
            <person name="Westerfield M."/>
            <person name="de Jong P.J."/>
            <person name="Zon L.I."/>
            <person name="Postlethwait J.H."/>
            <person name="Nusslein-Volhard C."/>
            <person name="Hubbard T.J."/>
            <person name="Roest Crollius H."/>
            <person name="Rogers J."/>
            <person name="Stemple D.L."/>
        </authorList>
    </citation>
    <scope>NUCLEOTIDE SEQUENCE [LARGE SCALE GENOMIC DNA]</scope>
    <source>
        <strain>Tuebingen</strain>
    </source>
</reference>
<reference key="3">
    <citation type="journal article" date="2013" name="N. Engl. J. Med.">
        <title>PLS3 mutations in X-linked osteoporosis with fractures.</title>
        <authorList>
            <person name="van Dijk F.S."/>
            <person name="Zillikens M.C."/>
            <person name="Micha D."/>
            <person name="Riessland M."/>
            <person name="Marcelis C.L."/>
            <person name="de Die-Smulders C.E."/>
            <person name="Milbradt J."/>
            <person name="Franken A.A."/>
            <person name="Harsevoort A.J."/>
            <person name="Lichtenbelt K.D."/>
            <person name="Pruijs H.E."/>
            <person name="Rubio-Gozalbo M.E."/>
            <person name="Zwertbroek R."/>
            <person name="Moutaouakil Y."/>
            <person name="Egthuijsen J."/>
            <person name="Hammerschmidt M."/>
            <person name="Bijman R."/>
            <person name="Semeins C.M."/>
            <person name="Bakker A.D."/>
            <person name="Everts V."/>
            <person name="Klein-Nulend J."/>
            <person name="Campos-Obando N."/>
            <person name="Hofman A."/>
            <person name="te Meerman G.J."/>
            <person name="Verkerk A.J."/>
            <person name="Uitterlinden A.G."/>
            <person name="Maugeri A."/>
            <person name="Sistermans E.A."/>
            <person name="Waisfisz Q."/>
            <person name="Meijers-Heijboer H."/>
            <person name="Wirth B."/>
            <person name="Simon M.E."/>
            <person name="Pals G."/>
        </authorList>
    </citation>
    <scope>DISRUPTION PHENOTYPE</scope>
</reference>
<comment type="function">
    <text evidence="1">Actin-bundling protein.</text>
</comment>
<comment type="subcellular location">
    <subcellularLocation>
        <location evidence="1">Cytoplasm</location>
    </subcellularLocation>
</comment>
<comment type="disruption phenotype">
    <text evidence="4">Morpholino knockdown of the protein causes severe dysplasia of craniofacial skeletal elements. Gross morphologic abnormalities are observed in the knockdown zebrafish larvae, including deformation of muscle tissue.</text>
</comment>
<proteinExistence type="evidence at transcript level"/>
<gene>
    <name type="primary">pls3</name>
    <name type="ORF">wu:fc04g03</name>
    <name type="ORF">zgc:91903</name>
</gene>
<name>PLST_DANRE</name>
<organism>
    <name type="scientific">Danio rerio</name>
    <name type="common">Zebrafish</name>
    <name type="synonym">Brachydanio rerio</name>
    <dbReference type="NCBI Taxonomy" id="7955"/>
    <lineage>
        <taxon>Eukaryota</taxon>
        <taxon>Metazoa</taxon>
        <taxon>Chordata</taxon>
        <taxon>Craniata</taxon>
        <taxon>Vertebrata</taxon>
        <taxon>Euteleostomi</taxon>
        <taxon>Actinopterygii</taxon>
        <taxon>Neopterygii</taxon>
        <taxon>Teleostei</taxon>
        <taxon>Ostariophysi</taxon>
        <taxon>Cypriniformes</taxon>
        <taxon>Danionidae</taxon>
        <taxon>Danioninae</taxon>
        <taxon>Danio</taxon>
    </lineage>
</organism>
<evidence type="ECO:0000250" key="1">
    <source>
        <dbReference type="UniProtKB" id="P13797"/>
    </source>
</evidence>
<evidence type="ECO:0000255" key="2">
    <source>
        <dbReference type="PROSITE-ProRule" id="PRU00044"/>
    </source>
</evidence>
<evidence type="ECO:0000255" key="3">
    <source>
        <dbReference type="PROSITE-ProRule" id="PRU00448"/>
    </source>
</evidence>
<evidence type="ECO:0000269" key="4">
    <source>
    </source>
</evidence>
<feature type="chain" id="PRO_0000460449" description="Plastin-3">
    <location>
        <begin position="1"/>
        <end position="627"/>
    </location>
</feature>
<feature type="domain" description="EF-hand 1" evidence="3">
    <location>
        <begin position="8"/>
        <end position="43"/>
    </location>
</feature>
<feature type="domain" description="EF-hand 2" evidence="3">
    <location>
        <begin position="48"/>
        <end position="83"/>
    </location>
</feature>
<feature type="domain" description="Calponin-homology (CH) 1" evidence="2">
    <location>
        <begin position="119"/>
        <end position="235"/>
    </location>
</feature>
<feature type="domain" description="Calponin-homology (CH) 2" evidence="2">
    <location>
        <begin position="263"/>
        <end position="374"/>
    </location>
</feature>
<feature type="domain" description="Calponin-homology (CH) 3" evidence="2">
    <location>
        <begin position="393"/>
        <end position="503"/>
    </location>
</feature>
<feature type="domain" description="Calponin-homology (CH) 4" evidence="2">
    <location>
        <begin position="515"/>
        <end position="624"/>
    </location>
</feature>
<feature type="region of interest" description="Actin-binding 1" evidence="1">
    <location>
        <begin position="105"/>
        <end position="378"/>
    </location>
</feature>
<feature type="region of interest" description="Actin-binding 2" evidence="1">
    <location>
        <begin position="379"/>
        <end position="624"/>
    </location>
</feature>
<feature type="binding site" evidence="3">
    <location>
        <position position="21"/>
    </location>
    <ligand>
        <name>Ca(2+)</name>
        <dbReference type="ChEBI" id="CHEBI:29108"/>
        <label>1</label>
    </ligand>
</feature>
<feature type="binding site" evidence="3">
    <location>
        <position position="23"/>
    </location>
    <ligand>
        <name>Ca(2+)</name>
        <dbReference type="ChEBI" id="CHEBI:29108"/>
        <label>1</label>
    </ligand>
</feature>
<feature type="binding site" evidence="3">
    <location>
        <position position="25"/>
    </location>
    <ligand>
        <name>Ca(2+)</name>
        <dbReference type="ChEBI" id="CHEBI:29108"/>
        <label>1</label>
    </ligand>
</feature>
<feature type="binding site" evidence="3">
    <location>
        <position position="32"/>
    </location>
    <ligand>
        <name>Ca(2+)</name>
        <dbReference type="ChEBI" id="CHEBI:29108"/>
        <label>1</label>
    </ligand>
</feature>
<feature type="binding site" evidence="3">
    <location>
        <position position="61"/>
    </location>
    <ligand>
        <name>Ca(2+)</name>
        <dbReference type="ChEBI" id="CHEBI:29108"/>
        <label>2</label>
    </ligand>
</feature>
<feature type="binding site" evidence="3">
    <location>
        <position position="63"/>
    </location>
    <ligand>
        <name>Ca(2+)</name>
        <dbReference type="ChEBI" id="CHEBI:29108"/>
        <label>2</label>
    </ligand>
</feature>
<feature type="binding site" evidence="3">
    <location>
        <position position="65"/>
    </location>
    <ligand>
        <name>Ca(2+)</name>
        <dbReference type="ChEBI" id="CHEBI:29108"/>
        <label>2</label>
    </ligand>
</feature>
<feature type="binding site" evidence="3">
    <location>
        <position position="67"/>
    </location>
    <ligand>
        <name>Ca(2+)</name>
        <dbReference type="ChEBI" id="CHEBI:29108"/>
        <label>2</label>
    </ligand>
</feature>
<feature type="binding site" evidence="3">
    <location>
        <position position="72"/>
    </location>
    <ligand>
        <name>Ca(2+)</name>
        <dbReference type="ChEBI" id="CHEBI:29108"/>
        <label>2</label>
    </ligand>
</feature>
<dbReference type="EMBL" id="BX511270">
    <property type="status" value="NOT_ANNOTATED_CDS"/>
    <property type="molecule type" value="Genomic_DNA"/>
</dbReference>
<dbReference type="EMBL" id="CT573221">
    <property type="status" value="NOT_ANNOTATED_CDS"/>
    <property type="molecule type" value="Genomic_DNA"/>
</dbReference>
<dbReference type="EMBL" id="BC076470">
    <property type="protein sequence ID" value="AAH76470.1"/>
    <property type="molecule type" value="mRNA"/>
</dbReference>
<dbReference type="EMBL" id="BC163975">
    <property type="protein sequence ID" value="AAI63975.1"/>
    <property type="molecule type" value="mRNA"/>
</dbReference>
<dbReference type="RefSeq" id="NP_001002326.1">
    <property type="nucleotide sequence ID" value="NM_001002326.1"/>
</dbReference>
<dbReference type="SMR" id="Q6DG81"/>
<dbReference type="FunCoup" id="Q6DG81">
    <property type="interactions" value="2023"/>
</dbReference>
<dbReference type="STRING" id="7955.ENSDARP00000054848"/>
<dbReference type="PaxDb" id="7955-ENSDARP00000054848"/>
<dbReference type="Ensembl" id="ENSDART00000054849">
    <property type="protein sequence ID" value="ENSDARP00000054848"/>
    <property type="gene ID" value="ENSDARG00000037655"/>
</dbReference>
<dbReference type="Ensembl" id="ENSDART00000161854">
    <property type="protein sequence ID" value="ENSDARP00000132035"/>
    <property type="gene ID" value="ENSDARG00000037655"/>
</dbReference>
<dbReference type="GeneID" id="436598"/>
<dbReference type="KEGG" id="dre:436598"/>
<dbReference type="AGR" id="ZFIN:ZDB-GENE-040718-10"/>
<dbReference type="CTD" id="5358"/>
<dbReference type="ZFIN" id="ZDB-GENE-040718-10">
    <property type="gene designation" value="pls3"/>
</dbReference>
<dbReference type="eggNOG" id="KOG0046">
    <property type="taxonomic scope" value="Eukaryota"/>
</dbReference>
<dbReference type="HOGENOM" id="CLU_015284_2_0_1"/>
<dbReference type="OMA" id="TVNHLYV"/>
<dbReference type="OrthoDB" id="431378at2759"/>
<dbReference type="TreeFam" id="TF300680"/>
<dbReference type="Proteomes" id="UP000000437">
    <property type="component" value="Chromosome 14"/>
</dbReference>
<dbReference type="Bgee" id="ENSDARG00000037655">
    <property type="expression patterns" value="Expressed in zone of skin and 20 other cell types or tissues"/>
</dbReference>
<dbReference type="GO" id="GO:0005884">
    <property type="term" value="C:actin filament"/>
    <property type="evidence" value="ECO:0000318"/>
    <property type="project" value="GO_Central"/>
</dbReference>
<dbReference type="GO" id="GO:0032432">
    <property type="term" value="C:actin filament bundle"/>
    <property type="evidence" value="ECO:0000318"/>
    <property type="project" value="GO_Central"/>
</dbReference>
<dbReference type="GO" id="GO:0005737">
    <property type="term" value="C:cytoplasm"/>
    <property type="evidence" value="ECO:0000318"/>
    <property type="project" value="GO_Central"/>
</dbReference>
<dbReference type="GO" id="GO:0051015">
    <property type="term" value="F:actin filament binding"/>
    <property type="evidence" value="ECO:0000318"/>
    <property type="project" value="GO_Central"/>
</dbReference>
<dbReference type="GO" id="GO:0005509">
    <property type="term" value="F:calcium ion binding"/>
    <property type="evidence" value="ECO:0007669"/>
    <property type="project" value="InterPro"/>
</dbReference>
<dbReference type="GO" id="GO:0051017">
    <property type="term" value="P:actin filament bundle assembly"/>
    <property type="evidence" value="ECO:0000318"/>
    <property type="project" value="GO_Central"/>
</dbReference>
<dbReference type="GO" id="GO:0051639">
    <property type="term" value="P:actin filament network formation"/>
    <property type="evidence" value="ECO:0000318"/>
    <property type="project" value="GO_Central"/>
</dbReference>
<dbReference type="GO" id="GO:0030282">
    <property type="term" value="P:bone mineralization"/>
    <property type="evidence" value="ECO:0000315"/>
    <property type="project" value="ZFIN"/>
</dbReference>
<dbReference type="GO" id="GO:0048701">
    <property type="term" value="P:embryonic cranial skeleton morphogenesis"/>
    <property type="evidence" value="ECO:0000315"/>
    <property type="project" value="ZFIN"/>
</dbReference>
<dbReference type="GO" id="GO:0008045">
    <property type="term" value="P:motor neuron axon guidance"/>
    <property type="evidence" value="ECO:0000315"/>
    <property type="project" value="ZFIN"/>
</dbReference>
<dbReference type="GO" id="GO:0039019">
    <property type="term" value="P:pronephric nephron development"/>
    <property type="evidence" value="ECO:0000315"/>
    <property type="project" value="ZFIN"/>
</dbReference>
<dbReference type="GO" id="GO:0072114">
    <property type="term" value="P:pronephros morphogenesis"/>
    <property type="evidence" value="ECO:0000315"/>
    <property type="project" value="ZFIN"/>
</dbReference>
<dbReference type="CDD" id="cd21328">
    <property type="entry name" value="CH_PLS3_rpt2"/>
    <property type="match status" value="1"/>
</dbReference>
<dbReference type="CDD" id="cd21331">
    <property type="entry name" value="CH_PLS3_rpt3"/>
    <property type="match status" value="1"/>
</dbReference>
<dbReference type="CDD" id="cd21334">
    <property type="entry name" value="CH_PLS3_rpt4"/>
    <property type="match status" value="1"/>
</dbReference>
<dbReference type="CDD" id="cd21292">
    <property type="entry name" value="CH_PLS_rpt1"/>
    <property type="match status" value="1"/>
</dbReference>
<dbReference type="CDD" id="cd00051">
    <property type="entry name" value="EFh"/>
    <property type="match status" value="1"/>
</dbReference>
<dbReference type="FunFam" id="1.10.238.10:FF:000059">
    <property type="entry name" value="Plastin 1"/>
    <property type="match status" value="1"/>
</dbReference>
<dbReference type="FunFam" id="1.10.418.10:FF:000010">
    <property type="entry name" value="Plastin-3 isoform 1"/>
    <property type="match status" value="1"/>
</dbReference>
<dbReference type="FunFam" id="1.10.418.10:FF:000012">
    <property type="entry name" value="Plastin-3 isoform 1"/>
    <property type="match status" value="1"/>
</dbReference>
<dbReference type="FunFam" id="1.10.418.10:FF:000014">
    <property type="entry name" value="Plastin-3 isoform 1"/>
    <property type="match status" value="1"/>
</dbReference>
<dbReference type="FunFam" id="1.10.418.10:FF:000025">
    <property type="entry name" value="Plastin-3 isoform 1"/>
    <property type="match status" value="1"/>
</dbReference>
<dbReference type="Gene3D" id="1.10.418.10">
    <property type="entry name" value="Calponin-like domain"/>
    <property type="match status" value="4"/>
</dbReference>
<dbReference type="Gene3D" id="1.10.238.10">
    <property type="entry name" value="EF-hand"/>
    <property type="match status" value="1"/>
</dbReference>
<dbReference type="InterPro" id="IPR001589">
    <property type="entry name" value="Actinin_actin-bd_CS"/>
</dbReference>
<dbReference type="InterPro" id="IPR001715">
    <property type="entry name" value="CH_dom"/>
</dbReference>
<dbReference type="InterPro" id="IPR036872">
    <property type="entry name" value="CH_dom_sf"/>
</dbReference>
<dbReference type="InterPro" id="IPR011992">
    <property type="entry name" value="EF-hand-dom_pair"/>
</dbReference>
<dbReference type="InterPro" id="IPR018247">
    <property type="entry name" value="EF_Hand_1_Ca_BS"/>
</dbReference>
<dbReference type="InterPro" id="IPR002048">
    <property type="entry name" value="EF_hand_dom"/>
</dbReference>
<dbReference type="InterPro" id="IPR039959">
    <property type="entry name" value="Fimbrin/Plastin"/>
</dbReference>
<dbReference type="PANTHER" id="PTHR19961">
    <property type="entry name" value="FIMBRIN/PLASTIN"/>
    <property type="match status" value="1"/>
</dbReference>
<dbReference type="PANTHER" id="PTHR19961:SF32">
    <property type="entry name" value="PLASTIN-3"/>
    <property type="match status" value="1"/>
</dbReference>
<dbReference type="Pfam" id="PF00307">
    <property type="entry name" value="CH"/>
    <property type="match status" value="4"/>
</dbReference>
<dbReference type="Pfam" id="PF13499">
    <property type="entry name" value="EF-hand_7"/>
    <property type="match status" value="1"/>
</dbReference>
<dbReference type="SMART" id="SM00033">
    <property type="entry name" value="CH"/>
    <property type="match status" value="4"/>
</dbReference>
<dbReference type="SMART" id="SM00054">
    <property type="entry name" value="EFh"/>
    <property type="match status" value="2"/>
</dbReference>
<dbReference type="SUPFAM" id="SSF47576">
    <property type="entry name" value="Calponin-homology domain, CH-domain"/>
    <property type="match status" value="1"/>
</dbReference>
<dbReference type="SUPFAM" id="SSF47473">
    <property type="entry name" value="EF-hand"/>
    <property type="match status" value="1"/>
</dbReference>
<dbReference type="PROSITE" id="PS00019">
    <property type="entry name" value="ACTININ_1"/>
    <property type="match status" value="1"/>
</dbReference>
<dbReference type="PROSITE" id="PS00020">
    <property type="entry name" value="ACTININ_2"/>
    <property type="match status" value="2"/>
</dbReference>
<dbReference type="PROSITE" id="PS50021">
    <property type="entry name" value="CH"/>
    <property type="match status" value="4"/>
</dbReference>
<dbReference type="PROSITE" id="PS00018">
    <property type="entry name" value="EF_HAND_1"/>
    <property type="match status" value="2"/>
</dbReference>
<dbReference type="PROSITE" id="PS50222">
    <property type="entry name" value="EF_HAND_2"/>
    <property type="match status" value="2"/>
</dbReference>
<keyword id="KW-0009">Actin-binding</keyword>
<keyword id="KW-0106">Calcium</keyword>
<keyword id="KW-0963">Cytoplasm</keyword>
<keyword id="KW-0479">Metal-binding</keyword>
<keyword id="KW-0597">Phosphoprotein</keyword>
<keyword id="KW-1185">Reference proteome</keyword>
<keyword id="KW-0677">Repeat</keyword>
<sequence length="627" mass="70150">MAGKISKEELEELREAFGKVDLNGNGFICDHELHDLFKEANLPLPGYKVREIIQKLMEEGDKNKDNMISFDEFVSIFQELKSGDIAKSFRKAINRKEGILAIGGTSELSSAGTQHSFSEEERFAFVNWINTALEHDPDCKHKLPMNPNTDALFKAVGDGIVLCKMINLSVPDTIDERTINKKKLTPFTIQENLNLALNSASAIGCHVVNIGALDLREGKPHLVLGLLWQIIKIGLFADIELSRNEALAALLRDGETLEDLMKLSPEELLLRWANFHLENAGWSKINNFSHDIKDSRAYFHLLNQIAPKGQKDGESRIDIDMSGFTEKDDLKRAECMLLQADKLGCRQFVTSTDVMSGNPKLNLAFVANLFNKYPALTKPENQDINWGLLEGETREERTFRNWMNSLGVNPHVNHLYGDLQDALVILQLYEKIKVPVDWNNKVNKPPYPKLGANMKKLENCNYAVELGKTKANFSLVGIGGQDLNDGNPTLTLALVWQLMRRYTLNVLENLGDGQKVNDDVIVSWVNKTLSQAGKSTKISNFKDKEISSSLAVLDLIDAIQPSSINYDLVKRGSLSDGDKLDNAKYAVSMARKIGARVYALPEDLVEVKPKMVMTVFACLMGRGMKRA</sequence>
<accession>Q6DG81</accession>
<accession>A0A0R4IB94</accession>
<accession>A0A8N7XJJ0</accession>
<accession>B2GNI5</accession>